<reference key="1">
    <citation type="journal article" date="2004" name="Science">
        <title>The Ashbya gossypii genome as a tool for mapping the ancient Saccharomyces cerevisiae genome.</title>
        <authorList>
            <person name="Dietrich F.S."/>
            <person name="Voegeli S."/>
            <person name="Brachat S."/>
            <person name="Lerch A."/>
            <person name="Gates K."/>
            <person name="Steiner S."/>
            <person name="Mohr C."/>
            <person name="Poehlmann R."/>
            <person name="Luedi P."/>
            <person name="Choi S."/>
            <person name="Wing R.A."/>
            <person name="Flavier A."/>
            <person name="Gaffney T.D."/>
            <person name="Philippsen P."/>
        </authorList>
    </citation>
    <scope>NUCLEOTIDE SEQUENCE [LARGE SCALE GENOMIC DNA]</scope>
    <source>
        <strain>ATCC 10895 / CBS 109.51 / FGSC 9923 / NRRL Y-1056</strain>
    </source>
</reference>
<reference key="2">
    <citation type="journal article" date="2013" name="G3 (Bethesda)">
        <title>Genomes of Ashbya fungi isolated from insects reveal four mating-type loci, numerous translocations, lack of transposons, and distinct gene duplications.</title>
        <authorList>
            <person name="Dietrich F.S."/>
            <person name="Voegeli S."/>
            <person name="Kuo S."/>
            <person name="Philippsen P."/>
        </authorList>
    </citation>
    <scope>GENOME REANNOTATION</scope>
    <scope>SEQUENCE REVISION TO 128; 133-134 AND 144</scope>
    <source>
        <strain>ATCC 10895 / CBS 109.51 / FGSC 9923 / NRRL Y-1056</strain>
    </source>
</reference>
<comment type="function">
    <text evidence="1">Required for normal synthesis of the cell wall.</text>
</comment>
<comment type="catalytic activity">
    <reaction>
        <text>Random hydrolysis of (1-&gt;6)-alpha-D-mannosidic linkages in unbranched (1-&gt;6)-mannans.</text>
        <dbReference type="EC" id="3.2.1.101"/>
    </reaction>
</comment>
<comment type="subcellular location">
    <subcellularLocation>
        <location evidence="1">Secreted</location>
        <location evidence="1">Cell wall</location>
    </subcellularLocation>
    <subcellularLocation>
        <location evidence="1">Cell membrane</location>
        <topology evidence="1">Lipid-anchor</topology>
        <topology evidence="1">GPI-anchor</topology>
    </subcellularLocation>
</comment>
<comment type="similarity">
    <text evidence="4">Belongs to the glycosyl hydrolase 76 family.</text>
</comment>
<keyword id="KW-1003">Cell membrane</keyword>
<keyword id="KW-0134">Cell wall</keyword>
<keyword id="KW-0961">Cell wall biogenesis/degradation</keyword>
<keyword id="KW-0325">Glycoprotein</keyword>
<keyword id="KW-0326">Glycosidase</keyword>
<keyword id="KW-0336">GPI-anchor</keyword>
<keyword id="KW-0378">Hydrolase</keyword>
<keyword id="KW-0449">Lipoprotein</keyword>
<keyword id="KW-0472">Membrane</keyword>
<keyword id="KW-1185">Reference proteome</keyword>
<keyword id="KW-0964">Secreted</keyword>
<keyword id="KW-0732">Signal</keyword>
<accession>Q75DG6</accession>
<protein>
    <recommendedName>
        <fullName>Mannan endo-1,6-alpha-mannosidase DCW1</fullName>
        <ecNumber>3.2.1.101</ecNumber>
    </recommendedName>
    <alternativeName>
        <fullName>Defective cell wall 1</fullName>
    </alternativeName>
    <alternativeName>
        <fullName>Endo-alpha-1-&gt;6-D-mannanase DCW1</fullName>
    </alternativeName>
</protein>
<dbReference type="EC" id="3.2.1.101"/>
<dbReference type="EMBL" id="AE016815">
    <property type="protein sequence ID" value="AAS50830.2"/>
    <property type="molecule type" value="Genomic_DNA"/>
</dbReference>
<dbReference type="RefSeq" id="NP_983006.2">
    <property type="nucleotide sequence ID" value="NM_208359.2"/>
</dbReference>
<dbReference type="SMR" id="Q75DG6"/>
<dbReference type="FunCoup" id="Q75DG6">
    <property type="interactions" value="14"/>
</dbReference>
<dbReference type="STRING" id="284811.Q75DG6"/>
<dbReference type="CAZy" id="GH76">
    <property type="family name" value="Glycoside Hydrolase Family 76"/>
</dbReference>
<dbReference type="GlyCosmos" id="Q75DG6">
    <property type="glycosylation" value="6 sites, No reported glycans"/>
</dbReference>
<dbReference type="EnsemblFungi" id="AAS50830">
    <property type="protein sequence ID" value="AAS50830"/>
    <property type="gene ID" value="AGOS_ABR060W"/>
</dbReference>
<dbReference type="GeneID" id="4619110"/>
<dbReference type="KEGG" id="ago:AGOS_ABR060W"/>
<dbReference type="eggNOG" id="ENOG502QSWP">
    <property type="taxonomic scope" value="Eukaryota"/>
</dbReference>
<dbReference type="HOGENOM" id="CLU_025694_1_2_1"/>
<dbReference type="InParanoid" id="Q75DG6"/>
<dbReference type="OMA" id="WAPHTYD"/>
<dbReference type="OrthoDB" id="4187847at2759"/>
<dbReference type="Proteomes" id="UP000000591">
    <property type="component" value="Chromosome II"/>
</dbReference>
<dbReference type="GO" id="GO:0005576">
    <property type="term" value="C:extracellular region"/>
    <property type="evidence" value="ECO:0007669"/>
    <property type="project" value="UniProtKB-KW"/>
</dbReference>
<dbReference type="GO" id="GO:0005886">
    <property type="term" value="C:plasma membrane"/>
    <property type="evidence" value="ECO:0007669"/>
    <property type="project" value="UniProtKB-SubCell"/>
</dbReference>
<dbReference type="GO" id="GO:0098552">
    <property type="term" value="C:side of membrane"/>
    <property type="evidence" value="ECO:0007669"/>
    <property type="project" value="UniProtKB-KW"/>
</dbReference>
<dbReference type="GO" id="GO:0008496">
    <property type="term" value="F:mannan endo-1,6-alpha-mannosidase activity"/>
    <property type="evidence" value="ECO:0007669"/>
    <property type="project" value="UniProtKB-EC"/>
</dbReference>
<dbReference type="GO" id="GO:0007117">
    <property type="term" value="P:budding cell bud growth"/>
    <property type="evidence" value="ECO:0000318"/>
    <property type="project" value="GO_Central"/>
</dbReference>
<dbReference type="GO" id="GO:0016052">
    <property type="term" value="P:carbohydrate catabolic process"/>
    <property type="evidence" value="ECO:0007669"/>
    <property type="project" value="InterPro"/>
</dbReference>
<dbReference type="GO" id="GO:0071555">
    <property type="term" value="P:cell wall organization"/>
    <property type="evidence" value="ECO:0007669"/>
    <property type="project" value="UniProtKB-KW"/>
</dbReference>
<dbReference type="GO" id="GO:0009272">
    <property type="term" value="P:fungal-type cell wall biogenesis"/>
    <property type="evidence" value="ECO:0000318"/>
    <property type="project" value="GO_Central"/>
</dbReference>
<dbReference type="FunFam" id="1.50.10.20:FF:000006">
    <property type="entry name" value="Mannan endo-1,6-alpha-mannosidase"/>
    <property type="match status" value="1"/>
</dbReference>
<dbReference type="Gene3D" id="1.50.10.20">
    <property type="match status" value="1"/>
</dbReference>
<dbReference type="InterPro" id="IPR008928">
    <property type="entry name" value="6-hairpin_glycosidase_sf"/>
</dbReference>
<dbReference type="InterPro" id="IPR005198">
    <property type="entry name" value="Glyco_hydro_76"/>
</dbReference>
<dbReference type="InterPro" id="IPR014480">
    <property type="entry name" value="Mannan-1_6-alpha_mannosidase"/>
</dbReference>
<dbReference type="PANTHER" id="PTHR12145">
    <property type="entry name" value="MANNAN ENDO-1,6-ALPHA-MANNOSIDASE DCW1"/>
    <property type="match status" value="1"/>
</dbReference>
<dbReference type="PANTHER" id="PTHR12145:SF36">
    <property type="entry name" value="MANNAN ENDO-1,6-ALPHA-MANNOSIDASE DCW1"/>
    <property type="match status" value="1"/>
</dbReference>
<dbReference type="Pfam" id="PF03663">
    <property type="entry name" value="Glyco_hydro_76"/>
    <property type="match status" value="1"/>
</dbReference>
<dbReference type="PIRSF" id="PIRSF016302">
    <property type="entry name" value="Man_a_manosd"/>
    <property type="match status" value="1"/>
</dbReference>
<dbReference type="SUPFAM" id="SSF48208">
    <property type="entry name" value="Six-hairpin glycosidases"/>
    <property type="match status" value="1"/>
</dbReference>
<feature type="signal peptide" evidence="2">
    <location>
        <begin position="1"/>
        <end position="21"/>
    </location>
</feature>
<feature type="chain" id="PRO_0000012121" description="Mannan endo-1,6-alpha-mannosidase DCW1">
    <location>
        <begin position="22"/>
        <end position="427"/>
    </location>
</feature>
<feature type="propeptide" id="PRO_0000012122" description="Removed in mature form" evidence="2">
    <location>
        <begin position="428"/>
        <end position="451"/>
    </location>
</feature>
<feature type="region of interest" description="Disordered" evidence="3">
    <location>
        <begin position="397"/>
        <end position="419"/>
    </location>
</feature>
<feature type="lipid moiety-binding region" description="GPI-anchor amidated aspartate" evidence="2">
    <location>
        <position position="427"/>
    </location>
</feature>
<feature type="glycosylation site" description="N-linked (GlcNAc...) asparagine" evidence="2">
    <location>
        <position position="84"/>
    </location>
</feature>
<feature type="glycosylation site" description="N-linked (GlcNAc...) asparagine" evidence="2">
    <location>
        <position position="109"/>
    </location>
</feature>
<feature type="glycosylation site" description="N-linked (GlcNAc...) asparagine" evidence="2">
    <location>
        <position position="203"/>
    </location>
</feature>
<feature type="glycosylation site" description="N-linked (GlcNAc...) asparagine" evidence="2">
    <location>
        <position position="242"/>
    </location>
</feature>
<feature type="glycosylation site" description="N-linked (GlcNAc...) asparagine" evidence="2">
    <location>
        <position position="267"/>
    </location>
</feature>
<feature type="glycosylation site" description="N-linked (GlcNAc...) asparagine" evidence="2">
    <location>
        <position position="291"/>
    </location>
</feature>
<sequence>MLAVTFTAAAVLSLLAASGRTLNLDVDDLQSIREATSLLATGLMDYYHGHDYGETVGKFSDPYYWWEAGGAWGSILDYWYYMENSTYNDLLTDSLLHQAGEDLSYTPWNETTTEGNDDQFFWGMAVMAAAERNFPNPPADQPQWLALAQAVFNTMALRWDMETCNGGLRWQIFRWNDGYHYKNSVSNGALFHMAARLTRYTGNATYLEWAERVYDWMYGVGLISIVQPNWHVVYDGTDINDNCTNLNKLQWTYNHGLIMAGCAFIYNHTQDELWHQRTLRFLDSARIFLSNDTLYEAGCQGGDNCNIDQRSFKAYFSRFLGLTAQLVPESRETIVRWIRASAQGAAASCSGGRDGHTCGLNWLINGWDGKWGLGEQMAALEIIQNLRCLERPAPYTAMNGGTSPGDPAAGTKTKAENLPPLDIKAGDRAGAGIITALIGSSFLACTLWLII</sequence>
<proteinExistence type="inferred from homology"/>
<organism>
    <name type="scientific">Eremothecium gossypii (strain ATCC 10895 / CBS 109.51 / FGSC 9923 / NRRL Y-1056)</name>
    <name type="common">Yeast</name>
    <name type="synonym">Ashbya gossypii</name>
    <dbReference type="NCBI Taxonomy" id="284811"/>
    <lineage>
        <taxon>Eukaryota</taxon>
        <taxon>Fungi</taxon>
        <taxon>Dikarya</taxon>
        <taxon>Ascomycota</taxon>
        <taxon>Saccharomycotina</taxon>
        <taxon>Saccharomycetes</taxon>
        <taxon>Saccharomycetales</taxon>
        <taxon>Saccharomycetaceae</taxon>
        <taxon>Eremothecium</taxon>
    </lineage>
</organism>
<evidence type="ECO:0000250" key="1"/>
<evidence type="ECO:0000255" key="2"/>
<evidence type="ECO:0000256" key="3">
    <source>
        <dbReference type="SAM" id="MobiDB-lite"/>
    </source>
</evidence>
<evidence type="ECO:0000305" key="4"/>
<gene>
    <name type="primary">DCW1</name>
    <name type="ordered locus">ABR060W</name>
</gene>
<name>DCW1_EREGS</name>